<dbReference type="EMBL" id="CP001215">
    <property type="protein sequence ID" value="ACP17597.1"/>
    <property type="molecule type" value="Genomic_DNA"/>
</dbReference>
<dbReference type="RefSeq" id="WP_000864235.1">
    <property type="nucleotide sequence ID" value="NC_012581.1"/>
</dbReference>
<dbReference type="SMR" id="C3LGS6"/>
<dbReference type="GeneID" id="83639160"/>
<dbReference type="KEGG" id="bah:BAMEG_5770"/>
<dbReference type="HOGENOM" id="CLU_078938_3_2_9"/>
<dbReference type="GO" id="GO:1990904">
    <property type="term" value="C:ribonucleoprotein complex"/>
    <property type="evidence" value="ECO:0007669"/>
    <property type="project" value="UniProtKB-KW"/>
</dbReference>
<dbReference type="GO" id="GO:0005840">
    <property type="term" value="C:ribosome"/>
    <property type="evidence" value="ECO:0007669"/>
    <property type="project" value="UniProtKB-KW"/>
</dbReference>
<dbReference type="GO" id="GO:0019843">
    <property type="term" value="F:rRNA binding"/>
    <property type="evidence" value="ECO:0007669"/>
    <property type="project" value="UniProtKB-UniRule"/>
</dbReference>
<dbReference type="GO" id="GO:0003735">
    <property type="term" value="F:structural constituent of ribosome"/>
    <property type="evidence" value="ECO:0007669"/>
    <property type="project" value="InterPro"/>
</dbReference>
<dbReference type="GO" id="GO:0006412">
    <property type="term" value="P:translation"/>
    <property type="evidence" value="ECO:0007669"/>
    <property type="project" value="UniProtKB-UniRule"/>
</dbReference>
<dbReference type="FunFam" id="3.10.430.100:FF:000002">
    <property type="entry name" value="50S ribosomal protein L9"/>
    <property type="match status" value="1"/>
</dbReference>
<dbReference type="FunFam" id="3.40.5.10:FF:000002">
    <property type="entry name" value="50S ribosomal protein L9"/>
    <property type="match status" value="1"/>
</dbReference>
<dbReference type="Gene3D" id="3.10.430.100">
    <property type="entry name" value="Ribosomal protein L9, C-terminal domain"/>
    <property type="match status" value="1"/>
</dbReference>
<dbReference type="Gene3D" id="3.40.5.10">
    <property type="entry name" value="Ribosomal protein L9, N-terminal domain"/>
    <property type="match status" value="1"/>
</dbReference>
<dbReference type="HAMAP" id="MF_00503">
    <property type="entry name" value="Ribosomal_bL9"/>
    <property type="match status" value="1"/>
</dbReference>
<dbReference type="InterPro" id="IPR000244">
    <property type="entry name" value="Ribosomal_bL9"/>
</dbReference>
<dbReference type="InterPro" id="IPR009027">
    <property type="entry name" value="Ribosomal_bL9/RNase_H1_N"/>
</dbReference>
<dbReference type="InterPro" id="IPR020594">
    <property type="entry name" value="Ribosomal_bL9_bac/chp"/>
</dbReference>
<dbReference type="InterPro" id="IPR020069">
    <property type="entry name" value="Ribosomal_bL9_C"/>
</dbReference>
<dbReference type="InterPro" id="IPR036791">
    <property type="entry name" value="Ribosomal_bL9_C_sf"/>
</dbReference>
<dbReference type="InterPro" id="IPR020070">
    <property type="entry name" value="Ribosomal_bL9_N"/>
</dbReference>
<dbReference type="InterPro" id="IPR036935">
    <property type="entry name" value="Ribosomal_bL9_N_sf"/>
</dbReference>
<dbReference type="NCBIfam" id="TIGR00158">
    <property type="entry name" value="L9"/>
    <property type="match status" value="1"/>
</dbReference>
<dbReference type="PANTHER" id="PTHR21368">
    <property type="entry name" value="50S RIBOSOMAL PROTEIN L9"/>
    <property type="match status" value="1"/>
</dbReference>
<dbReference type="Pfam" id="PF03948">
    <property type="entry name" value="Ribosomal_L9_C"/>
    <property type="match status" value="1"/>
</dbReference>
<dbReference type="Pfam" id="PF01281">
    <property type="entry name" value="Ribosomal_L9_N"/>
    <property type="match status" value="1"/>
</dbReference>
<dbReference type="SUPFAM" id="SSF55658">
    <property type="entry name" value="L9 N-domain-like"/>
    <property type="match status" value="1"/>
</dbReference>
<dbReference type="SUPFAM" id="SSF55653">
    <property type="entry name" value="Ribosomal protein L9 C-domain"/>
    <property type="match status" value="1"/>
</dbReference>
<dbReference type="PROSITE" id="PS00651">
    <property type="entry name" value="RIBOSOMAL_L9"/>
    <property type="match status" value="1"/>
</dbReference>
<organism>
    <name type="scientific">Bacillus anthracis (strain CDC 684 / NRRL 3495)</name>
    <dbReference type="NCBI Taxonomy" id="568206"/>
    <lineage>
        <taxon>Bacteria</taxon>
        <taxon>Bacillati</taxon>
        <taxon>Bacillota</taxon>
        <taxon>Bacilli</taxon>
        <taxon>Bacillales</taxon>
        <taxon>Bacillaceae</taxon>
        <taxon>Bacillus</taxon>
        <taxon>Bacillus cereus group</taxon>
    </lineage>
</organism>
<reference key="1">
    <citation type="submission" date="2008-10" db="EMBL/GenBank/DDBJ databases">
        <title>Genome sequence of Bacillus anthracis str. CDC 684.</title>
        <authorList>
            <person name="Dodson R.J."/>
            <person name="Munk A.C."/>
            <person name="Brettin T."/>
            <person name="Bruce D."/>
            <person name="Detter C."/>
            <person name="Tapia R."/>
            <person name="Han C."/>
            <person name="Sutton G."/>
            <person name="Sims D."/>
        </authorList>
    </citation>
    <scope>NUCLEOTIDE SEQUENCE [LARGE SCALE GENOMIC DNA]</scope>
    <source>
        <strain>CDC 684 / NRRL 3495</strain>
    </source>
</reference>
<name>RL9_BACAC</name>
<gene>
    <name evidence="1" type="primary">rplI</name>
    <name type="ordered locus">BAMEG_5770</name>
</gene>
<feature type="chain" id="PRO_1000196222" description="Large ribosomal subunit protein bL9">
    <location>
        <begin position="1"/>
        <end position="148"/>
    </location>
</feature>
<sequence length="148" mass="16356">MKVIFLKDVKGKGKKGEVKNVPDGYANNFLLKQGLAAEATNSSMKTLEAQKRKEEKDAAAELESAKQLKETLEKLTVELKAKSGEGGRLFGSITSKQIVDAMQKSHKIKLDKRKFEMDDAIRALGYTNVTVKLHPQVTATVKVHVSEQ</sequence>
<comment type="function">
    <text evidence="1">Binds to the 23S rRNA.</text>
</comment>
<comment type="similarity">
    <text evidence="1">Belongs to the bacterial ribosomal protein bL9 family.</text>
</comment>
<protein>
    <recommendedName>
        <fullName evidence="1">Large ribosomal subunit protein bL9</fullName>
    </recommendedName>
    <alternativeName>
        <fullName evidence="2">50S ribosomal protein L9</fullName>
    </alternativeName>
</protein>
<evidence type="ECO:0000255" key="1">
    <source>
        <dbReference type="HAMAP-Rule" id="MF_00503"/>
    </source>
</evidence>
<evidence type="ECO:0000305" key="2"/>
<proteinExistence type="inferred from homology"/>
<accession>C3LGS6</accession>
<keyword id="KW-0687">Ribonucleoprotein</keyword>
<keyword id="KW-0689">Ribosomal protein</keyword>
<keyword id="KW-0694">RNA-binding</keyword>
<keyword id="KW-0699">rRNA-binding</keyword>